<name>TAD2_SCHPO</name>
<evidence type="ECO:0000250" key="1">
    <source>
        <dbReference type="UniProtKB" id="P47058"/>
    </source>
</evidence>
<evidence type="ECO:0000255" key="2"/>
<evidence type="ECO:0000255" key="3">
    <source>
        <dbReference type="PROSITE-ProRule" id="PRU01083"/>
    </source>
</evidence>
<evidence type="ECO:0000269" key="4">
    <source>
    </source>
</evidence>
<evidence type="ECO:0000312" key="5">
    <source>
        <dbReference type="PomBase" id="SPBC16D10.10"/>
    </source>
</evidence>
<evidence type="ECO:0007744" key="6">
    <source>
        <dbReference type="PDB" id="7EEY"/>
    </source>
</evidence>
<evidence type="ECO:0007829" key="7">
    <source>
        <dbReference type="PDB" id="7EEY"/>
    </source>
</evidence>
<comment type="function">
    <text evidence="4">Structural subunit of tRNA-specific adenosine deaminase, which deaminates adenosine-34 (the first, also called wobble position of the anticodon) to inosine in many tRNAs. Inosine-34 allows the decoding of 3 different nucleotides at the third position of mRNA codons, as inosine is able to pair with U, C, and A. The wobble inosine tRNA modification is essential for cell cycle progression in the G1/S and G2/M transitions in fission yeast.</text>
</comment>
<comment type="catalytic activity">
    <reaction evidence="1">
        <text>adenosine(34) in tRNA + H2O + H(+) = inosine(34) in tRNA + NH4(+)</text>
        <dbReference type="Rhea" id="RHEA:43168"/>
        <dbReference type="Rhea" id="RHEA-COMP:10373"/>
        <dbReference type="Rhea" id="RHEA-COMP:10374"/>
        <dbReference type="ChEBI" id="CHEBI:15377"/>
        <dbReference type="ChEBI" id="CHEBI:15378"/>
        <dbReference type="ChEBI" id="CHEBI:28938"/>
        <dbReference type="ChEBI" id="CHEBI:74411"/>
        <dbReference type="ChEBI" id="CHEBI:82852"/>
        <dbReference type="EC" id="3.5.4.33"/>
    </reaction>
</comment>
<comment type="cofactor">
    <cofactor evidence="1">
        <name>Zn(2+)</name>
        <dbReference type="ChEBI" id="CHEBI:29105"/>
    </cofactor>
</comment>
<comment type="subunit">
    <text evidence="1">Heterodimer with Tad3.</text>
</comment>
<comment type="similarity">
    <text evidence="2">Belongs to the cytidine and deoxycytidylate deaminase family. ADAT2 subfamily.</text>
</comment>
<reference key="1">
    <citation type="journal article" date="2002" name="Nature">
        <title>The genome sequence of Schizosaccharomyces pombe.</title>
        <authorList>
            <person name="Wood V."/>
            <person name="Gwilliam R."/>
            <person name="Rajandream M.A."/>
            <person name="Lyne M.H."/>
            <person name="Lyne R."/>
            <person name="Stewart A."/>
            <person name="Sgouros J.G."/>
            <person name="Peat N."/>
            <person name="Hayles J."/>
            <person name="Baker S.G."/>
            <person name="Basham D."/>
            <person name="Bowman S."/>
            <person name="Brooks K."/>
            <person name="Brown D."/>
            <person name="Brown S."/>
            <person name="Chillingworth T."/>
            <person name="Churcher C.M."/>
            <person name="Collins M."/>
            <person name="Connor R."/>
            <person name="Cronin A."/>
            <person name="Davis P."/>
            <person name="Feltwell T."/>
            <person name="Fraser A."/>
            <person name="Gentles S."/>
            <person name="Goble A."/>
            <person name="Hamlin N."/>
            <person name="Harris D.E."/>
            <person name="Hidalgo J."/>
            <person name="Hodgson G."/>
            <person name="Holroyd S."/>
            <person name="Hornsby T."/>
            <person name="Howarth S."/>
            <person name="Huckle E.J."/>
            <person name="Hunt S."/>
            <person name="Jagels K."/>
            <person name="James K.D."/>
            <person name="Jones L."/>
            <person name="Jones M."/>
            <person name="Leather S."/>
            <person name="McDonald S."/>
            <person name="McLean J."/>
            <person name="Mooney P."/>
            <person name="Moule S."/>
            <person name="Mungall K.L."/>
            <person name="Murphy L.D."/>
            <person name="Niblett D."/>
            <person name="Odell C."/>
            <person name="Oliver K."/>
            <person name="O'Neil S."/>
            <person name="Pearson D."/>
            <person name="Quail M.A."/>
            <person name="Rabbinowitsch E."/>
            <person name="Rutherford K.M."/>
            <person name="Rutter S."/>
            <person name="Saunders D."/>
            <person name="Seeger K."/>
            <person name="Sharp S."/>
            <person name="Skelton J."/>
            <person name="Simmonds M.N."/>
            <person name="Squares R."/>
            <person name="Squares S."/>
            <person name="Stevens K."/>
            <person name="Taylor K."/>
            <person name="Taylor R.G."/>
            <person name="Tivey A."/>
            <person name="Walsh S.V."/>
            <person name="Warren T."/>
            <person name="Whitehead S."/>
            <person name="Woodward J.R."/>
            <person name="Volckaert G."/>
            <person name="Aert R."/>
            <person name="Robben J."/>
            <person name="Grymonprez B."/>
            <person name="Weltjens I."/>
            <person name="Vanstreels E."/>
            <person name="Rieger M."/>
            <person name="Schaefer M."/>
            <person name="Mueller-Auer S."/>
            <person name="Gabel C."/>
            <person name="Fuchs M."/>
            <person name="Duesterhoeft A."/>
            <person name="Fritzc C."/>
            <person name="Holzer E."/>
            <person name="Moestl D."/>
            <person name="Hilbert H."/>
            <person name="Borzym K."/>
            <person name="Langer I."/>
            <person name="Beck A."/>
            <person name="Lehrach H."/>
            <person name="Reinhardt R."/>
            <person name="Pohl T.M."/>
            <person name="Eger P."/>
            <person name="Zimmermann W."/>
            <person name="Wedler H."/>
            <person name="Wambutt R."/>
            <person name="Purnelle B."/>
            <person name="Goffeau A."/>
            <person name="Cadieu E."/>
            <person name="Dreano S."/>
            <person name="Gloux S."/>
            <person name="Lelaure V."/>
            <person name="Mottier S."/>
            <person name="Galibert F."/>
            <person name="Aves S.J."/>
            <person name="Xiang Z."/>
            <person name="Hunt C."/>
            <person name="Moore K."/>
            <person name="Hurst S.M."/>
            <person name="Lucas M."/>
            <person name="Rochet M."/>
            <person name="Gaillardin C."/>
            <person name="Tallada V.A."/>
            <person name="Garzon A."/>
            <person name="Thode G."/>
            <person name="Daga R.R."/>
            <person name="Cruzado L."/>
            <person name="Jimenez J."/>
            <person name="Sanchez M."/>
            <person name="del Rey F."/>
            <person name="Benito J."/>
            <person name="Dominguez A."/>
            <person name="Revuelta J.L."/>
            <person name="Moreno S."/>
            <person name="Armstrong J."/>
            <person name="Forsburg S.L."/>
            <person name="Cerutti L."/>
            <person name="Lowe T."/>
            <person name="McCombie W.R."/>
            <person name="Paulsen I."/>
            <person name="Potashkin J."/>
            <person name="Shpakovski G.V."/>
            <person name="Ussery D."/>
            <person name="Barrell B.G."/>
            <person name="Nurse P."/>
        </authorList>
    </citation>
    <scope>NUCLEOTIDE SEQUENCE [LARGE SCALE GENOMIC DNA]</scope>
    <source>
        <strain>972 / ATCC 24843</strain>
    </source>
</reference>
<reference key="2">
    <citation type="journal article" date="2007" name="J. Biol. Chem.">
        <title>Wobble inosine tRNA modification is essential to cell cycle progression in G(1)/S and G(2)/M transitions in fission yeast.</title>
        <authorList>
            <person name="Tsutsumi S."/>
            <person name="Sugiura R."/>
            <person name="Ma Y."/>
            <person name="Tokuoka H."/>
            <person name="Ohta K."/>
            <person name="Ohte R."/>
            <person name="Noma A."/>
            <person name="Suzuki T."/>
            <person name="Kuno T."/>
        </authorList>
    </citation>
    <scope>FUNCTION</scope>
</reference>
<reference evidence="6" key="3">
    <citation type="journal article" date="2021" name="Comput. Struct. Biotechnol. J.">
        <title>Functional and structural investigation of N-terminal domain of the SpTad2/3 heterodimeric tRNA deaminase.</title>
        <authorList>
            <person name="Liu X."/>
            <person name="Zhou J."/>
            <person name="Ge R."/>
            <person name="Xie W."/>
        </authorList>
    </citation>
    <scope>X-RAY CRYSTALLOGRAPHY (2.60 ANGSTROMS) OF 1-202</scope>
    <scope>DISULFIDE BONDS</scope>
</reference>
<dbReference type="EC" id="3.5.4.33"/>
<dbReference type="EMBL" id="CU329671">
    <property type="protein sequence ID" value="CAK9840816.1"/>
    <property type="molecule type" value="Genomic_DNA"/>
</dbReference>
<dbReference type="PIR" id="T39574">
    <property type="entry name" value="T39574"/>
</dbReference>
<dbReference type="PDB" id="7EEY">
    <property type="method" value="X-ray"/>
    <property type="resolution" value="2.60 A"/>
    <property type="chains" value="A/B/C/D=1-202"/>
</dbReference>
<dbReference type="PDBsum" id="7EEY"/>
<dbReference type="SMR" id="O94642"/>
<dbReference type="BioGRID" id="276190">
    <property type="interactions" value="1"/>
</dbReference>
<dbReference type="FunCoup" id="O94642">
    <property type="interactions" value="57"/>
</dbReference>
<dbReference type="IntAct" id="O94642">
    <property type="interactions" value="1"/>
</dbReference>
<dbReference type="STRING" id="284812.O94642"/>
<dbReference type="iPTMnet" id="O94642"/>
<dbReference type="PaxDb" id="4896-SPBC16D10.10.1"/>
<dbReference type="EnsemblFungi" id="SPBC16D10.10.1">
    <property type="protein sequence ID" value="SPBC16D10.10.1:pep"/>
    <property type="gene ID" value="SPBC16D10.10"/>
</dbReference>
<dbReference type="PomBase" id="SPBC16D10.10">
    <property type="gene designation" value="tad2"/>
</dbReference>
<dbReference type="VEuPathDB" id="FungiDB:SPBC16D10.10"/>
<dbReference type="eggNOG" id="KOG1018">
    <property type="taxonomic scope" value="Eukaryota"/>
</dbReference>
<dbReference type="HOGENOM" id="CLU_710102_0_0_1"/>
<dbReference type="InParanoid" id="O94642"/>
<dbReference type="OMA" id="YMKLAHE"/>
<dbReference type="PhylomeDB" id="O94642"/>
<dbReference type="PRO" id="PR:O94642"/>
<dbReference type="Proteomes" id="UP000002485">
    <property type="component" value="Chromosome II"/>
</dbReference>
<dbReference type="GO" id="GO:0005737">
    <property type="term" value="C:cytoplasm"/>
    <property type="evidence" value="ECO:0000266"/>
    <property type="project" value="PomBase"/>
</dbReference>
<dbReference type="GO" id="GO:0005634">
    <property type="term" value="C:nucleus"/>
    <property type="evidence" value="ECO:0000266"/>
    <property type="project" value="PomBase"/>
</dbReference>
<dbReference type="GO" id="GO:0052718">
    <property type="term" value="C:tRNA-specific adenosine-34 deaminase complex"/>
    <property type="evidence" value="ECO:0000314"/>
    <property type="project" value="PomBase"/>
</dbReference>
<dbReference type="GO" id="GO:0005524">
    <property type="term" value="F:ATP binding"/>
    <property type="evidence" value="ECO:0007669"/>
    <property type="project" value="InterPro"/>
</dbReference>
<dbReference type="GO" id="GO:0019239">
    <property type="term" value="F:deaminase activity"/>
    <property type="evidence" value="ECO:0007669"/>
    <property type="project" value="UniProtKB-ARBA"/>
</dbReference>
<dbReference type="GO" id="GO:0016301">
    <property type="term" value="F:kinase activity"/>
    <property type="evidence" value="ECO:0007669"/>
    <property type="project" value="InterPro"/>
</dbReference>
<dbReference type="GO" id="GO:0052717">
    <property type="term" value="F:tRNA-specific adenosine-34 deaminase activity"/>
    <property type="evidence" value="ECO:0000314"/>
    <property type="project" value="PomBase"/>
</dbReference>
<dbReference type="GO" id="GO:0008270">
    <property type="term" value="F:zinc ion binding"/>
    <property type="evidence" value="ECO:0007669"/>
    <property type="project" value="InterPro"/>
</dbReference>
<dbReference type="GO" id="GO:0006139">
    <property type="term" value="P:nucleobase-containing compound metabolic process"/>
    <property type="evidence" value="ECO:0007669"/>
    <property type="project" value="UniProtKB-ARBA"/>
</dbReference>
<dbReference type="GO" id="GO:0002100">
    <property type="term" value="P:tRNA wobble adenosine to inosine editing"/>
    <property type="evidence" value="ECO:0000314"/>
    <property type="project" value="PomBase"/>
</dbReference>
<dbReference type="CDD" id="cd01285">
    <property type="entry name" value="nucleoside_deaminase"/>
    <property type="match status" value="1"/>
</dbReference>
<dbReference type="FunFam" id="3.40.140.10:FF:000039">
    <property type="entry name" value="tRNA-specific adenosine deaminase"/>
    <property type="match status" value="1"/>
</dbReference>
<dbReference type="Gene3D" id="3.40.140.10">
    <property type="entry name" value="Cytidine Deaminase, domain 2"/>
    <property type="match status" value="1"/>
</dbReference>
<dbReference type="Gene3D" id="3.40.50.300">
    <property type="entry name" value="P-loop containing nucleotide triphosphate hydrolases"/>
    <property type="match status" value="1"/>
</dbReference>
<dbReference type="InterPro" id="IPR016192">
    <property type="entry name" value="APOBEC/CMP_deaminase_Zn-bd"/>
</dbReference>
<dbReference type="InterPro" id="IPR002125">
    <property type="entry name" value="CMP_dCMP_dom"/>
</dbReference>
<dbReference type="InterPro" id="IPR016193">
    <property type="entry name" value="Cytidine_deaminase-like"/>
</dbReference>
<dbReference type="InterPro" id="IPR027417">
    <property type="entry name" value="P-loop_NTPase"/>
</dbReference>
<dbReference type="InterPro" id="IPR006083">
    <property type="entry name" value="PRK/URK"/>
</dbReference>
<dbReference type="PANTHER" id="PTHR11079">
    <property type="entry name" value="CYTOSINE DEAMINASE FAMILY MEMBER"/>
    <property type="match status" value="1"/>
</dbReference>
<dbReference type="PANTHER" id="PTHR11079:SF149">
    <property type="entry name" value="TRNA-SPECIFIC ADENOSINE DEAMINASE 2"/>
    <property type="match status" value="1"/>
</dbReference>
<dbReference type="Pfam" id="PF00383">
    <property type="entry name" value="dCMP_cyt_deam_1"/>
    <property type="match status" value="1"/>
</dbReference>
<dbReference type="Pfam" id="PF00485">
    <property type="entry name" value="PRK"/>
    <property type="match status" value="1"/>
</dbReference>
<dbReference type="PRINTS" id="PR00988">
    <property type="entry name" value="URIDINKINASE"/>
</dbReference>
<dbReference type="SUPFAM" id="SSF53927">
    <property type="entry name" value="Cytidine deaminase-like"/>
    <property type="match status" value="1"/>
</dbReference>
<dbReference type="SUPFAM" id="SSF52540">
    <property type="entry name" value="P-loop containing nucleoside triphosphate hydrolases"/>
    <property type="match status" value="1"/>
</dbReference>
<dbReference type="PROSITE" id="PS00903">
    <property type="entry name" value="CYT_DCMP_DEAMINASES_1"/>
    <property type="match status" value="1"/>
</dbReference>
<dbReference type="PROSITE" id="PS51747">
    <property type="entry name" value="CYT_DCMP_DEAMINASES_2"/>
    <property type="match status" value="1"/>
</dbReference>
<gene>
    <name type="primary">tad2</name>
    <name evidence="5" type="ORF">SPBC16D10.10</name>
</gene>
<keyword id="KW-0002">3D-structure</keyword>
<keyword id="KW-0378">Hydrolase</keyword>
<keyword id="KW-0479">Metal-binding</keyword>
<keyword id="KW-1185">Reference proteome</keyword>
<keyword id="KW-0819">tRNA processing</keyword>
<keyword id="KW-0862">Zinc</keyword>
<organism>
    <name type="scientific">Schizosaccharomyces pombe (strain 972 / ATCC 24843)</name>
    <name type="common">Fission yeast</name>
    <dbReference type="NCBI Taxonomy" id="284812"/>
    <lineage>
        <taxon>Eukaryota</taxon>
        <taxon>Fungi</taxon>
        <taxon>Dikarya</taxon>
        <taxon>Ascomycota</taxon>
        <taxon>Taphrinomycotina</taxon>
        <taxon>Schizosaccharomycetes</taxon>
        <taxon>Schizosaccharomycetales</taxon>
        <taxon>Schizosaccharomycetaceae</taxon>
        <taxon>Schizosaccharomyces</taxon>
    </lineage>
</organism>
<sequence>MAGDSVKSAIIGIAGGPFSGKTQLCEQLLERLKSSAPSTFSKLIHLTSFLYPNSVDRYALSSYDIEAFKKVLSLISQGAEKICLPDGSCIKLPVDQNRIILIEGYYLLLPELLPYYTSKIFVYEDADTRLERCVLQRVKAEKGDLTKVLNDFVTLSKPAYDSSIHPTRENADIILPQKENIDTALLFVSQHLQDILAEMNKTSSSNTVKYDTQHETYMKLAHEMARTSLSNREVPVSCVFVYKGEVIGRGFNETNCSLSGIRHAELIAIEKILEHYPASVFKETTLYVTVEPCLMCAAALKQLHIKAVYFGCGNDRFGGCGSVFSINKDQSIDPSYPVYPGLFYSEAVMLMREFYVQENVKAPVPQSKKQRVLKREVKSLDLSRFK</sequence>
<proteinExistence type="evidence at protein level"/>
<protein>
    <recommendedName>
        <fullName>tRNA-specific adenosine deaminase subunit tad2</fullName>
        <ecNumber>3.5.4.33</ecNumber>
    </recommendedName>
    <alternativeName>
        <fullName>tRNA-specific adenosine-34 deaminase subunit tad2</fullName>
    </alternativeName>
</protein>
<accession>O94642</accession>
<accession>A0AAN2H6F6</accession>
<feature type="chain" id="PRO_0000310823" description="tRNA-specific adenosine deaminase subunit tad2">
    <location>
        <begin position="1"/>
        <end position="386"/>
    </location>
</feature>
<feature type="domain" description="CMP/dCMP-type deaminase" evidence="3">
    <location>
        <begin position="212"/>
        <end position="322"/>
    </location>
</feature>
<feature type="active site" description="Proton donor" evidence="3">
    <location>
        <position position="265"/>
    </location>
</feature>
<feature type="binding site" evidence="3">
    <location>
        <position position="263"/>
    </location>
    <ligand>
        <name>Zn(2+)</name>
        <dbReference type="ChEBI" id="CHEBI:29105"/>
        <note>catalytic</note>
    </ligand>
</feature>
<feature type="binding site" evidence="3">
    <location>
        <position position="293"/>
    </location>
    <ligand>
        <name>Zn(2+)</name>
        <dbReference type="ChEBI" id="CHEBI:29105"/>
        <note>catalytic</note>
    </ligand>
</feature>
<feature type="binding site" evidence="3">
    <location>
        <position position="296"/>
    </location>
    <ligand>
        <name>Zn(2+)</name>
        <dbReference type="ChEBI" id="CHEBI:29105"/>
        <note>catalytic</note>
    </ligand>
</feature>
<feature type="strand" evidence="7">
    <location>
        <begin position="8"/>
        <end position="15"/>
    </location>
</feature>
<feature type="helix" evidence="7">
    <location>
        <begin position="21"/>
        <end position="35"/>
    </location>
</feature>
<feature type="strand" evidence="7">
    <location>
        <begin position="39"/>
        <end position="45"/>
    </location>
</feature>
<feature type="helix" evidence="7">
    <location>
        <begin position="46"/>
        <end position="49"/>
    </location>
</feature>
<feature type="helix" evidence="7">
    <location>
        <begin position="60"/>
        <end position="62"/>
    </location>
</feature>
<feature type="helix" evidence="7">
    <location>
        <begin position="65"/>
        <end position="76"/>
    </location>
</feature>
<feature type="strand" evidence="7">
    <location>
        <begin position="80"/>
        <end position="83"/>
    </location>
</feature>
<feature type="strand" evidence="7">
    <location>
        <begin position="89"/>
        <end position="91"/>
    </location>
</feature>
<feature type="strand" evidence="7">
    <location>
        <begin position="94"/>
        <end position="96"/>
    </location>
</feature>
<feature type="strand" evidence="7">
    <location>
        <begin position="98"/>
        <end position="104"/>
    </location>
</feature>
<feature type="turn" evidence="7">
    <location>
        <begin position="105"/>
        <end position="108"/>
    </location>
</feature>
<feature type="helix" evidence="7">
    <location>
        <begin position="110"/>
        <end position="115"/>
    </location>
</feature>
<feature type="strand" evidence="7">
    <location>
        <begin position="117"/>
        <end position="123"/>
    </location>
</feature>
<feature type="helix" evidence="7">
    <location>
        <begin position="126"/>
        <end position="137"/>
    </location>
</feature>
<feature type="turn" evidence="7">
    <location>
        <begin position="138"/>
        <end position="141"/>
    </location>
</feature>
<feature type="helix" evidence="7">
    <location>
        <begin position="145"/>
        <end position="154"/>
    </location>
</feature>
<feature type="helix" evidence="7">
    <location>
        <begin position="156"/>
        <end position="163"/>
    </location>
</feature>
<feature type="helix" evidence="7">
    <location>
        <begin position="165"/>
        <end position="170"/>
    </location>
</feature>
<feature type="strand" evidence="7">
    <location>
        <begin position="171"/>
        <end position="176"/>
    </location>
</feature>
<feature type="helix" evidence="7">
    <location>
        <begin position="183"/>
        <end position="199"/>
    </location>
</feature>